<dbReference type="EMBL" id="AC016163">
    <property type="protein sequence ID" value="AAG51821.1"/>
    <property type="molecule type" value="Genomic_DNA"/>
</dbReference>
<dbReference type="EMBL" id="CP002684">
    <property type="protein sequence ID" value="AEE35202.1"/>
    <property type="molecule type" value="Genomic_DNA"/>
</dbReference>
<dbReference type="EMBL" id="BT010764">
    <property type="protein sequence ID" value="AAR23734.1"/>
    <property type="molecule type" value="mRNA"/>
</dbReference>
<dbReference type="EMBL" id="BT011790">
    <property type="protein sequence ID" value="AAS68114.1"/>
    <property type="molecule type" value="mRNA"/>
</dbReference>
<dbReference type="RefSeq" id="NP_177301.1">
    <property type="nucleotide sequence ID" value="NM_105814.4"/>
</dbReference>
<dbReference type="SMR" id="Q9C9I2"/>
<dbReference type="BioGRID" id="28706">
    <property type="interactions" value="6"/>
</dbReference>
<dbReference type="FunCoup" id="Q9C9I2">
    <property type="interactions" value="19"/>
</dbReference>
<dbReference type="STRING" id="3702.Q9C9I2"/>
<dbReference type="PaxDb" id="3702-AT1G71450.1"/>
<dbReference type="EnsemblPlants" id="AT1G71450.1">
    <property type="protein sequence ID" value="AT1G71450.1"/>
    <property type="gene ID" value="AT1G71450"/>
</dbReference>
<dbReference type="GeneID" id="843486"/>
<dbReference type="Gramene" id="AT1G71450.1">
    <property type="protein sequence ID" value="AT1G71450.1"/>
    <property type="gene ID" value="AT1G71450"/>
</dbReference>
<dbReference type="KEGG" id="ath:AT1G71450"/>
<dbReference type="Araport" id="AT1G71450"/>
<dbReference type="TAIR" id="AT1G71450">
    <property type="gene designation" value="FUF1"/>
</dbReference>
<dbReference type="eggNOG" id="ENOG502RXZK">
    <property type="taxonomic scope" value="Eukaryota"/>
</dbReference>
<dbReference type="HOGENOM" id="CLU_063331_1_1_1"/>
<dbReference type="InParanoid" id="Q9C9I2"/>
<dbReference type="OMA" id="MNAWETY"/>
<dbReference type="OrthoDB" id="688329at2759"/>
<dbReference type="PhylomeDB" id="Q9C9I2"/>
<dbReference type="PRO" id="PR:Q9C9I2"/>
<dbReference type="Proteomes" id="UP000006548">
    <property type="component" value="Chromosome 1"/>
</dbReference>
<dbReference type="ExpressionAtlas" id="Q9C9I2">
    <property type="expression patterns" value="baseline and differential"/>
</dbReference>
<dbReference type="GO" id="GO:0005634">
    <property type="term" value="C:nucleus"/>
    <property type="evidence" value="ECO:0007669"/>
    <property type="project" value="UniProtKB-SubCell"/>
</dbReference>
<dbReference type="GO" id="GO:0003677">
    <property type="term" value="F:DNA binding"/>
    <property type="evidence" value="ECO:0007669"/>
    <property type="project" value="UniProtKB-KW"/>
</dbReference>
<dbReference type="GO" id="GO:0003700">
    <property type="term" value="F:DNA-binding transcription factor activity"/>
    <property type="evidence" value="ECO:0000250"/>
    <property type="project" value="TAIR"/>
</dbReference>
<dbReference type="GO" id="GO:0009873">
    <property type="term" value="P:ethylene-activated signaling pathway"/>
    <property type="evidence" value="ECO:0007669"/>
    <property type="project" value="UniProtKB-KW"/>
</dbReference>
<dbReference type="GO" id="GO:0060862">
    <property type="term" value="P:negative regulation of floral organ abscission"/>
    <property type="evidence" value="ECO:0000315"/>
    <property type="project" value="TAIR"/>
</dbReference>
<dbReference type="CDD" id="cd00018">
    <property type="entry name" value="AP2"/>
    <property type="match status" value="1"/>
</dbReference>
<dbReference type="FunFam" id="3.30.730.10:FF:000001">
    <property type="entry name" value="Ethylene-responsive transcription factor 2"/>
    <property type="match status" value="1"/>
</dbReference>
<dbReference type="Gene3D" id="3.30.730.10">
    <property type="entry name" value="AP2/ERF domain"/>
    <property type="match status" value="1"/>
</dbReference>
<dbReference type="InterPro" id="IPR001471">
    <property type="entry name" value="AP2/ERF_dom"/>
</dbReference>
<dbReference type="InterPro" id="IPR036955">
    <property type="entry name" value="AP2/ERF_dom_sf"/>
</dbReference>
<dbReference type="InterPro" id="IPR051032">
    <property type="entry name" value="AP2/ERF_TF_ERF_subfamily"/>
</dbReference>
<dbReference type="InterPro" id="IPR016177">
    <property type="entry name" value="DNA-bd_dom_sf"/>
</dbReference>
<dbReference type="PANTHER" id="PTHR31985:SF111">
    <property type="entry name" value="ETHYLENE-RESPONSIVE TRANSCRIPTION FACTOR ERF021"/>
    <property type="match status" value="1"/>
</dbReference>
<dbReference type="PANTHER" id="PTHR31985">
    <property type="entry name" value="ETHYLENE-RESPONSIVE TRANSCRIPTION FACTOR ERF042-RELATED"/>
    <property type="match status" value="1"/>
</dbReference>
<dbReference type="Pfam" id="PF00847">
    <property type="entry name" value="AP2"/>
    <property type="match status" value="1"/>
</dbReference>
<dbReference type="PRINTS" id="PR00367">
    <property type="entry name" value="ETHRSPELEMNT"/>
</dbReference>
<dbReference type="SMART" id="SM00380">
    <property type="entry name" value="AP2"/>
    <property type="match status" value="1"/>
</dbReference>
<dbReference type="SUPFAM" id="SSF54171">
    <property type="entry name" value="DNA-binding domain"/>
    <property type="match status" value="1"/>
</dbReference>
<dbReference type="PROSITE" id="PS51032">
    <property type="entry name" value="AP2_ERF"/>
    <property type="match status" value="1"/>
</dbReference>
<evidence type="ECO:0000250" key="1"/>
<evidence type="ECO:0000255" key="2">
    <source>
        <dbReference type="PROSITE-ProRule" id="PRU00366"/>
    </source>
</evidence>
<evidence type="ECO:0000256" key="3">
    <source>
        <dbReference type="SAM" id="MobiDB-lite"/>
    </source>
</evidence>
<evidence type="ECO:0000305" key="4"/>
<proteinExistence type="evidence at transcript level"/>
<name>ERF21_ARATH</name>
<reference key="1">
    <citation type="journal article" date="2000" name="Nature">
        <title>Sequence and analysis of chromosome 1 of the plant Arabidopsis thaliana.</title>
        <authorList>
            <person name="Theologis A."/>
            <person name="Ecker J.R."/>
            <person name="Palm C.J."/>
            <person name="Federspiel N.A."/>
            <person name="Kaul S."/>
            <person name="White O."/>
            <person name="Alonso J."/>
            <person name="Altafi H."/>
            <person name="Araujo R."/>
            <person name="Bowman C.L."/>
            <person name="Brooks S.Y."/>
            <person name="Buehler E."/>
            <person name="Chan A."/>
            <person name="Chao Q."/>
            <person name="Chen H."/>
            <person name="Cheuk R.F."/>
            <person name="Chin C.W."/>
            <person name="Chung M.K."/>
            <person name="Conn L."/>
            <person name="Conway A.B."/>
            <person name="Conway A.R."/>
            <person name="Creasy T.H."/>
            <person name="Dewar K."/>
            <person name="Dunn P."/>
            <person name="Etgu P."/>
            <person name="Feldblyum T.V."/>
            <person name="Feng J.-D."/>
            <person name="Fong B."/>
            <person name="Fujii C.Y."/>
            <person name="Gill J.E."/>
            <person name="Goldsmith A.D."/>
            <person name="Haas B."/>
            <person name="Hansen N.F."/>
            <person name="Hughes B."/>
            <person name="Huizar L."/>
            <person name="Hunter J.L."/>
            <person name="Jenkins J."/>
            <person name="Johnson-Hopson C."/>
            <person name="Khan S."/>
            <person name="Khaykin E."/>
            <person name="Kim C.J."/>
            <person name="Koo H.L."/>
            <person name="Kremenetskaia I."/>
            <person name="Kurtz D.B."/>
            <person name="Kwan A."/>
            <person name="Lam B."/>
            <person name="Langin-Hooper S."/>
            <person name="Lee A."/>
            <person name="Lee J.M."/>
            <person name="Lenz C.A."/>
            <person name="Li J.H."/>
            <person name="Li Y.-P."/>
            <person name="Lin X."/>
            <person name="Liu S.X."/>
            <person name="Liu Z.A."/>
            <person name="Luros J.S."/>
            <person name="Maiti R."/>
            <person name="Marziali A."/>
            <person name="Militscher J."/>
            <person name="Miranda M."/>
            <person name="Nguyen M."/>
            <person name="Nierman W.C."/>
            <person name="Osborne B.I."/>
            <person name="Pai G."/>
            <person name="Peterson J."/>
            <person name="Pham P.K."/>
            <person name="Rizzo M."/>
            <person name="Rooney T."/>
            <person name="Rowley D."/>
            <person name="Sakano H."/>
            <person name="Salzberg S.L."/>
            <person name="Schwartz J.R."/>
            <person name="Shinn P."/>
            <person name="Southwick A.M."/>
            <person name="Sun H."/>
            <person name="Tallon L.J."/>
            <person name="Tambunga G."/>
            <person name="Toriumi M.J."/>
            <person name="Town C.D."/>
            <person name="Utterback T."/>
            <person name="Van Aken S."/>
            <person name="Vaysberg M."/>
            <person name="Vysotskaia V.S."/>
            <person name="Walker M."/>
            <person name="Wu D."/>
            <person name="Yu G."/>
            <person name="Fraser C.M."/>
            <person name="Venter J.C."/>
            <person name="Davis R.W."/>
        </authorList>
    </citation>
    <scope>NUCLEOTIDE SEQUENCE [LARGE SCALE GENOMIC DNA]</scope>
    <source>
        <strain>cv. Columbia</strain>
    </source>
</reference>
<reference key="2">
    <citation type="journal article" date="2017" name="Plant J.">
        <title>Araport11: a complete reannotation of the Arabidopsis thaliana reference genome.</title>
        <authorList>
            <person name="Cheng C.Y."/>
            <person name="Krishnakumar V."/>
            <person name="Chan A.P."/>
            <person name="Thibaud-Nissen F."/>
            <person name="Schobel S."/>
            <person name="Town C.D."/>
        </authorList>
    </citation>
    <scope>GENOME REANNOTATION</scope>
    <source>
        <strain>cv. Columbia</strain>
    </source>
</reference>
<reference key="3">
    <citation type="submission" date="2004-03" db="EMBL/GenBank/DDBJ databases">
        <authorList>
            <person name="Shinn P."/>
            <person name="Chen H."/>
            <person name="Cheuk R.F."/>
            <person name="Kim C.J."/>
            <person name="Ecker J.R."/>
        </authorList>
    </citation>
    <scope>NUCLEOTIDE SEQUENCE [LARGE SCALE MRNA]</scope>
    <source>
        <strain>cv. Columbia</strain>
    </source>
</reference>
<reference key="4">
    <citation type="journal article" date="2006" name="Plant Physiol.">
        <title>Genome-wide analysis of the ERF gene family in Arabidopsis and rice.</title>
        <authorList>
            <person name="Nakano T."/>
            <person name="Suzuki K."/>
            <person name="Fujimura T."/>
            <person name="Shinshi H."/>
        </authorList>
    </citation>
    <scope>GENE FAMILY</scope>
    <scope>NOMENCLATURE</scope>
</reference>
<sequence length="183" mass="20316">MAGLRNSGNSDKAQNDGKGVPSAYRGVRKRKWGKWVSEIREPGTKNRIWLGSFETPEMAATAYDVAAFHFRGREARLNFPELASSLPRPADSSSDSIRMAVHEATLCRTTEGTESAMQVDSSSSSNVAPTMVRLSPREIQAINESTLGSPTTMMHSTYDPMEFANDVEMNAWETYQSDFLWDP</sequence>
<organism>
    <name type="scientific">Arabidopsis thaliana</name>
    <name type="common">Mouse-ear cress</name>
    <dbReference type="NCBI Taxonomy" id="3702"/>
    <lineage>
        <taxon>Eukaryota</taxon>
        <taxon>Viridiplantae</taxon>
        <taxon>Streptophyta</taxon>
        <taxon>Embryophyta</taxon>
        <taxon>Tracheophyta</taxon>
        <taxon>Spermatophyta</taxon>
        <taxon>Magnoliopsida</taxon>
        <taxon>eudicotyledons</taxon>
        <taxon>Gunneridae</taxon>
        <taxon>Pentapetalae</taxon>
        <taxon>rosids</taxon>
        <taxon>malvids</taxon>
        <taxon>Brassicales</taxon>
        <taxon>Brassicaceae</taxon>
        <taxon>Camelineae</taxon>
        <taxon>Arabidopsis</taxon>
    </lineage>
</organism>
<accession>Q9C9I2</accession>
<keyword id="KW-0010">Activator</keyword>
<keyword id="KW-0238">DNA-binding</keyword>
<keyword id="KW-0936">Ethylene signaling pathway</keyword>
<keyword id="KW-0539">Nucleus</keyword>
<keyword id="KW-1185">Reference proteome</keyword>
<keyword id="KW-0804">Transcription</keyword>
<keyword id="KW-0805">Transcription regulation</keyword>
<gene>
    <name type="primary">ERF021</name>
    <name type="ordered locus">At1g71450</name>
    <name type="ORF">F26A9.17</name>
</gene>
<feature type="chain" id="PRO_0000290381" description="Ethylene-responsive transcription factor ERF021">
    <location>
        <begin position="1"/>
        <end position="183"/>
    </location>
</feature>
<feature type="DNA-binding region" description="AP2/ERF" evidence="2">
    <location>
        <begin position="23"/>
        <end position="80"/>
    </location>
</feature>
<feature type="region of interest" description="Disordered" evidence="3">
    <location>
        <begin position="1"/>
        <end position="25"/>
    </location>
</feature>
<feature type="compositionally biased region" description="Polar residues" evidence="3">
    <location>
        <begin position="1"/>
        <end position="12"/>
    </location>
</feature>
<protein>
    <recommendedName>
        <fullName>Ethylene-responsive transcription factor ERF021</fullName>
    </recommendedName>
</protein>
<comment type="function">
    <text evidence="1">Probably acts as a transcriptional activator. Binds to the GCC-box pathogenesis-related promoter element. May be involved in the regulation of gene expression by stress factors and by components of stress signal transduction pathways (By similarity).</text>
</comment>
<comment type="subcellular location">
    <subcellularLocation>
        <location evidence="4">Nucleus</location>
    </subcellularLocation>
</comment>
<comment type="similarity">
    <text evidence="4">Belongs to the AP2/ERF transcription factor family. ERF subfamily.</text>
</comment>